<dbReference type="EC" id="1.10.3.-"/>
<dbReference type="EMBL" id="CP000253">
    <property type="protein sequence ID" value="ABD30124.1"/>
    <property type="molecule type" value="Genomic_DNA"/>
</dbReference>
<dbReference type="RefSeq" id="WP_000017736.1">
    <property type="nucleotide sequence ID" value="NZ_LS483365.1"/>
</dbReference>
<dbReference type="RefSeq" id="YP_499552.1">
    <property type="nucleotide sequence ID" value="NC_007795.1"/>
</dbReference>
<dbReference type="SMR" id="Q2FZK1"/>
<dbReference type="STRING" id="93061.SAOUHSC_01000"/>
<dbReference type="PaxDb" id="1280-SAXN108_1056"/>
<dbReference type="GeneID" id="3920400"/>
<dbReference type="GeneID" id="66839255"/>
<dbReference type="KEGG" id="sao:SAOUHSC_01000"/>
<dbReference type="PATRIC" id="fig|93061.5.peg.918"/>
<dbReference type="eggNOG" id="COG1845">
    <property type="taxonomic scope" value="Bacteria"/>
</dbReference>
<dbReference type="HOGENOM" id="CLU_044071_3_2_9"/>
<dbReference type="OrthoDB" id="9810850at2"/>
<dbReference type="PRO" id="PR:Q2FZK1"/>
<dbReference type="Proteomes" id="UP000008816">
    <property type="component" value="Chromosome"/>
</dbReference>
<dbReference type="GO" id="GO:0005886">
    <property type="term" value="C:plasma membrane"/>
    <property type="evidence" value="ECO:0007669"/>
    <property type="project" value="UniProtKB-SubCell"/>
</dbReference>
<dbReference type="GO" id="GO:0004129">
    <property type="term" value="F:cytochrome-c oxidase activity"/>
    <property type="evidence" value="ECO:0007669"/>
    <property type="project" value="InterPro"/>
</dbReference>
<dbReference type="GO" id="GO:0019646">
    <property type="term" value="P:aerobic electron transport chain"/>
    <property type="evidence" value="ECO:0007669"/>
    <property type="project" value="InterPro"/>
</dbReference>
<dbReference type="GO" id="GO:0009060">
    <property type="term" value="P:aerobic respiration"/>
    <property type="evidence" value="ECO:0000318"/>
    <property type="project" value="GO_Central"/>
</dbReference>
<dbReference type="GO" id="GO:0042773">
    <property type="term" value="P:ATP synthesis coupled electron transport"/>
    <property type="evidence" value="ECO:0007669"/>
    <property type="project" value="InterPro"/>
</dbReference>
<dbReference type="CDD" id="cd02863">
    <property type="entry name" value="Ubiquinol_oxidase_III"/>
    <property type="match status" value="1"/>
</dbReference>
<dbReference type="FunFam" id="1.20.120.80:FF:000001">
    <property type="entry name" value="Cytochrome (Ubi)quinol oxidase subunit III"/>
    <property type="match status" value="1"/>
</dbReference>
<dbReference type="Gene3D" id="1.20.120.80">
    <property type="entry name" value="Cytochrome c oxidase, subunit III, four-helix bundle"/>
    <property type="match status" value="1"/>
</dbReference>
<dbReference type="InterPro" id="IPR024791">
    <property type="entry name" value="Cyt_c/ubiquinol_Oxase_su3"/>
</dbReference>
<dbReference type="InterPro" id="IPR000298">
    <property type="entry name" value="Cyt_c_oxidase-like_su3"/>
</dbReference>
<dbReference type="InterPro" id="IPR035973">
    <property type="entry name" value="Cyt_c_oxidase_su3-like_sf"/>
</dbReference>
<dbReference type="InterPro" id="IPR013833">
    <property type="entry name" value="Cyt_c_oxidase_su3_a-hlx"/>
</dbReference>
<dbReference type="InterPro" id="IPR014246">
    <property type="entry name" value="QoxC"/>
</dbReference>
<dbReference type="InterPro" id="IPR033946">
    <property type="entry name" value="Ubiquinol_oxase_su3_dom"/>
</dbReference>
<dbReference type="NCBIfam" id="TIGR02897">
    <property type="entry name" value="QoxC"/>
    <property type="match status" value="1"/>
</dbReference>
<dbReference type="PANTHER" id="PTHR11403:SF2">
    <property type="entry name" value="CYTOCHROME BO(3) UBIQUINOL OXIDASE SUBUNIT 3"/>
    <property type="match status" value="1"/>
</dbReference>
<dbReference type="PANTHER" id="PTHR11403">
    <property type="entry name" value="CYTOCHROME C OXIDASE SUBUNIT III"/>
    <property type="match status" value="1"/>
</dbReference>
<dbReference type="Pfam" id="PF00510">
    <property type="entry name" value="COX3"/>
    <property type="match status" value="1"/>
</dbReference>
<dbReference type="SUPFAM" id="SSF81452">
    <property type="entry name" value="Cytochrome c oxidase subunit III-like"/>
    <property type="match status" value="1"/>
</dbReference>
<dbReference type="PROSITE" id="PS50253">
    <property type="entry name" value="COX3"/>
    <property type="match status" value="1"/>
</dbReference>
<name>QOX3_STAA8</name>
<comment type="function">
    <text evidence="1">Catalyzes quinol oxidation with the concomitant reduction of oxygen to water.</text>
</comment>
<comment type="catalytic activity">
    <reaction>
        <text>2 a quinol + O2 = 2 a quinone + 2 H2O</text>
        <dbReference type="Rhea" id="RHEA:55376"/>
        <dbReference type="ChEBI" id="CHEBI:15377"/>
        <dbReference type="ChEBI" id="CHEBI:15379"/>
        <dbReference type="ChEBI" id="CHEBI:24646"/>
        <dbReference type="ChEBI" id="CHEBI:132124"/>
    </reaction>
</comment>
<comment type="subcellular location">
    <subcellularLocation>
        <location evidence="1">Cell membrane</location>
        <topology evidence="1">Multi-pass membrane protein</topology>
    </subcellularLocation>
</comment>
<comment type="similarity">
    <text evidence="3">Belongs to the cytochrome c oxidase subunit 3 family.</text>
</comment>
<accession>Q2FZK1</accession>
<gene>
    <name type="primary">qoxC</name>
    <name type="ordered locus">SAOUHSC_01000</name>
</gene>
<sequence>MSHDTNTIDSRTHEGELNKLGFWIFITAEFALFGTLFATLLTLQHGGDYAGKMTTELFELPLVLIMTFALLFSSYTCGIAIYYMRQEKQKLMMFWMIITLLLGLVFVGFEIYEFAHYASEGVNPTIGSYWSSFFILLGTHGCHVSLGIVWAICLLIQIQRRGLDKYNAPKLFIVSLYWHFLDVVWVFIFTAVYMIGMVYSG</sequence>
<keyword id="KW-1003">Cell membrane</keyword>
<keyword id="KW-0472">Membrane</keyword>
<keyword id="KW-0560">Oxidoreductase</keyword>
<keyword id="KW-1185">Reference proteome</keyword>
<keyword id="KW-0812">Transmembrane</keyword>
<keyword id="KW-1133">Transmembrane helix</keyword>
<proteinExistence type="inferred from homology"/>
<reference key="1">
    <citation type="book" date="2006" name="Gram positive pathogens, 2nd edition">
        <title>The Staphylococcus aureus NCTC 8325 genome.</title>
        <editorList>
            <person name="Fischetti V."/>
            <person name="Novick R."/>
            <person name="Ferretti J."/>
            <person name="Portnoy D."/>
            <person name="Rood J."/>
        </editorList>
        <authorList>
            <person name="Gillaspy A.F."/>
            <person name="Worrell V."/>
            <person name="Orvis J."/>
            <person name="Roe B.A."/>
            <person name="Dyer D.W."/>
            <person name="Iandolo J.J."/>
        </authorList>
    </citation>
    <scope>NUCLEOTIDE SEQUENCE [LARGE SCALE GENOMIC DNA]</scope>
    <source>
        <strain>NCTC 8325 / PS 47</strain>
    </source>
</reference>
<evidence type="ECO:0000250" key="1"/>
<evidence type="ECO:0000255" key="2"/>
<evidence type="ECO:0000305" key="3"/>
<feature type="chain" id="PRO_0000275891" description="Probable quinol oxidase subunit 3">
    <location>
        <begin position="1"/>
        <end position="201"/>
    </location>
</feature>
<feature type="transmembrane region" description="Helical" evidence="2">
    <location>
        <begin position="20"/>
        <end position="40"/>
    </location>
</feature>
<feature type="transmembrane region" description="Helical" evidence="2">
    <location>
        <begin position="62"/>
        <end position="82"/>
    </location>
</feature>
<feature type="transmembrane region" description="Helical" evidence="2">
    <location>
        <begin position="91"/>
        <end position="111"/>
    </location>
</feature>
<feature type="transmembrane region" description="Helical" evidence="2">
    <location>
        <begin position="133"/>
        <end position="153"/>
    </location>
</feature>
<feature type="transmembrane region" description="Helical" evidence="2">
    <location>
        <begin position="172"/>
        <end position="192"/>
    </location>
</feature>
<protein>
    <recommendedName>
        <fullName>Probable quinol oxidase subunit 3</fullName>
        <ecNumber>1.10.3.-</ecNumber>
    </recommendedName>
    <alternativeName>
        <fullName>Quinol oxidase polypeptide III</fullName>
    </alternativeName>
</protein>
<organism>
    <name type="scientific">Staphylococcus aureus (strain NCTC 8325 / PS 47)</name>
    <dbReference type="NCBI Taxonomy" id="93061"/>
    <lineage>
        <taxon>Bacteria</taxon>
        <taxon>Bacillati</taxon>
        <taxon>Bacillota</taxon>
        <taxon>Bacilli</taxon>
        <taxon>Bacillales</taxon>
        <taxon>Staphylococcaceae</taxon>
        <taxon>Staphylococcus</taxon>
    </lineage>
</organism>